<reference key="1">
    <citation type="submission" date="2003-03" db="EMBL/GenBank/DDBJ databases">
        <title>African swine fever virus genomes.</title>
        <authorList>
            <person name="Kutish G.F."/>
            <person name="Rock D.L."/>
        </authorList>
    </citation>
    <scope>NUCLEOTIDE SEQUENCE [LARGE SCALE GENOMIC DNA]</scope>
</reference>
<protein>
    <recommendedName>
        <fullName>Uncharacterized protein EP152R</fullName>
        <shortName>pEP152R</shortName>
    </recommendedName>
</protein>
<comment type="subcellular location">
    <subcellularLocation>
        <location evidence="1">Virion</location>
    </subcellularLocation>
</comment>
<comment type="similarity">
    <text evidence="3">Belongs to the asfivirus EP152R family.</text>
</comment>
<organism>
    <name type="scientific">African swine fever virus (isolate Warthog/Namibia/Wart80/1980)</name>
    <name type="common">ASFV</name>
    <dbReference type="NCBI Taxonomy" id="561444"/>
    <lineage>
        <taxon>Viruses</taxon>
        <taxon>Varidnaviria</taxon>
        <taxon>Bamfordvirae</taxon>
        <taxon>Nucleocytoviricota</taxon>
        <taxon>Pokkesviricetes</taxon>
        <taxon>Asfuvirales</taxon>
        <taxon>Asfarviridae</taxon>
        <taxon>Asfivirus</taxon>
        <taxon>African swine fever virus</taxon>
    </lineage>
</organism>
<keyword id="KW-0732">Signal</keyword>
<keyword id="KW-0946">Virion</keyword>
<feature type="signal peptide" evidence="2">
    <location>
        <begin position="1"/>
        <end position="23"/>
    </location>
</feature>
<feature type="chain" id="PRO_0000373538" description="Uncharacterized protein EP152R">
    <location>
        <begin position="24"/>
        <end position="150"/>
    </location>
</feature>
<gene>
    <name type="ordered locus">War-066</name>
</gene>
<dbReference type="EMBL" id="AY261366">
    <property type="status" value="NOT_ANNOTATED_CDS"/>
    <property type="molecule type" value="Genomic_DNA"/>
</dbReference>
<dbReference type="Proteomes" id="UP000000858">
    <property type="component" value="Segment"/>
</dbReference>
<dbReference type="GO" id="GO:0044423">
    <property type="term" value="C:virion component"/>
    <property type="evidence" value="ECO:0007669"/>
    <property type="project" value="UniProtKB-KW"/>
</dbReference>
<proteinExistence type="inferred from homology"/>
<evidence type="ECO:0000250" key="1">
    <source>
        <dbReference type="UniProtKB" id="Q65149"/>
    </source>
</evidence>
<evidence type="ECO:0000255" key="2"/>
<evidence type="ECO:0000305" key="3"/>
<organismHost>
    <name type="scientific">Ornithodoros</name>
    <name type="common">relapsing fever ticks</name>
    <dbReference type="NCBI Taxonomy" id="6937"/>
</organismHost>
<organismHost>
    <name type="scientific">Phacochoerus aethiopicus</name>
    <name type="common">Warthog</name>
    <dbReference type="NCBI Taxonomy" id="85517"/>
</organismHost>
<organismHost>
    <name type="scientific">Phacochoerus africanus</name>
    <name type="common">Warthog</name>
    <dbReference type="NCBI Taxonomy" id="41426"/>
</organismHost>
<organismHost>
    <name type="scientific">Potamochoerus larvatus</name>
    <name type="common">Bushpig</name>
    <dbReference type="NCBI Taxonomy" id="273792"/>
</organismHost>
<organismHost>
    <name type="scientific">Sus scrofa</name>
    <name type="common">Pig</name>
    <dbReference type="NCBI Taxonomy" id="9823"/>
</organismHost>
<name>VF152_ASFWA</name>
<sequence length="150" mass="17514">MYSILIACLVLLLCLIIYVGHRADHARKYLEGMWHGDPVFLKQSGLQSFYLYIQPDHTCFFSVVNKNGEKLMETKIPCTITNKIYMFFKPIFEFHVVMEDIHSYFPKQFNFLLDSAEGKLILENNHVIYAVLYKDNFATALGKTVKKYIT</sequence>
<accession>P0CA62</accession>